<name>NADD_LEPIC</name>
<sequence>MNSSILTGIFGGSFDPPHEGHSEILKSFFLEVPDCKEVFVIPNRQNPLKEEKISLSENILEMLNLFVSEFSQSIRILDLELKRSGPSYTIQTIQELKTIYPNRKFVLLIGEDNYSNFHKWKDWEKILTEVETIFVFRRFSKEVPLNSHLNSLFEFKFLENPLIPVTSTDLRKSFFQSKVPNLISKKVLDYILKNKLYSK</sequence>
<proteinExistence type="inferred from homology"/>
<feature type="chain" id="PRO_0000181420" description="Probable nicotinate-nucleotide adenylyltransferase">
    <location>
        <begin position="1"/>
        <end position="199"/>
    </location>
</feature>
<organism>
    <name type="scientific">Leptospira interrogans serogroup Icterohaemorrhagiae serovar copenhageni (strain Fiocruz L1-130)</name>
    <dbReference type="NCBI Taxonomy" id="267671"/>
    <lineage>
        <taxon>Bacteria</taxon>
        <taxon>Pseudomonadati</taxon>
        <taxon>Spirochaetota</taxon>
        <taxon>Spirochaetia</taxon>
        <taxon>Leptospirales</taxon>
        <taxon>Leptospiraceae</taxon>
        <taxon>Leptospira</taxon>
    </lineage>
</organism>
<keyword id="KW-0067">ATP-binding</keyword>
<keyword id="KW-0520">NAD</keyword>
<keyword id="KW-0547">Nucleotide-binding</keyword>
<keyword id="KW-0548">Nucleotidyltransferase</keyword>
<keyword id="KW-0662">Pyridine nucleotide biosynthesis</keyword>
<keyword id="KW-0808">Transferase</keyword>
<gene>
    <name evidence="1" type="primary">nadD</name>
    <name type="ordered locus">LIC_12770</name>
</gene>
<protein>
    <recommendedName>
        <fullName evidence="1">Probable nicotinate-nucleotide adenylyltransferase</fullName>
        <ecNumber evidence="1">2.7.7.18</ecNumber>
    </recommendedName>
    <alternativeName>
        <fullName evidence="1">Deamido-NAD(+) diphosphorylase</fullName>
    </alternativeName>
    <alternativeName>
        <fullName evidence="1">Deamido-NAD(+) pyrophosphorylase</fullName>
    </alternativeName>
    <alternativeName>
        <fullName evidence="1">Nicotinate mononucleotide adenylyltransferase</fullName>
        <shortName evidence="1">NaMN adenylyltransferase</shortName>
    </alternativeName>
</protein>
<comment type="function">
    <text evidence="1">Catalyzes the reversible adenylation of nicotinate mononucleotide (NaMN) to nicotinic acid adenine dinucleotide (NaAD).</text>
</comment>
<comment type="catalytic activity">
    <reaction evidence="1">
        <text>nicotinate beta-D-ribonucleotide + ATP + H(+) = deamido-NAD(+) + diphosphate</text>
        <dbReference type="Rhea" id="RHEA:22860"/>
        <dbReference type="ChEBI" id="CHEBI:15378"/>
        <dbReference type="ChEBI" id="CHEBI:30616"/>
        <dbReference type="ChEBI" id="CHEBI:33019"/>
        <dbReference type="ChEBI" id="CHEBI:57502"/>
        <dbReference type="ChEBI" id="CHEBI:58437"/>
        <dbReference type="EC" id="2.7.7.18"/>
    </reaction>
</comment>
<comment type="pathway">
    <text evidence="1">Cofactor biosynthesis; NAD(+) biosynthesis; deamido-NAD(+) from nicotinate D-ribonucleotide: step 1/1.</text>
</comment>
<comment type="similarity">
    <text evidence="1">Belongs to the NadD family.</text>
</comment>
<reference key="1">
    <citation type="journal article" date="2004" name="J. Bacteriol.">
        <title>Comparative genomics of two Leptospira interrogans serovars reveals novel insights into physiology and pathogenesis.</title>
        <authorList>
            <person name="Nascimento A.L.T.O."/>
            <person name="Ko A.I."/>
            <person name="Martins E.A.L."/>
            <person name="Monteiro-Vitorello C.B."/>
            <person name="Ho P.L."/>
            <person name="Haake D.A."/>
            <person name="Verjovski-Almeida S."/>
            <person name="Hartskeerl R.A."/>
            <person name="Marques M.V."/>
            <person name="Oliveira M.C."/>
            <person name="Menck C.F.M."/>
            <person name="Leite L.C.C."/>
            <person name="Carrer H."/>
            <person name="Coutinho L.L."/>
            <person name="Degrave W.M."/>
            <person name="Dellagostin O.A."/>
            <person name="El-Dorry H."/>
            <person name="Ferro E.S."/>
            <person name="Ferro M.I.T."/>
            <person name="Furlan L.R."/>
            <person name="Gamberini M."/>
            <person name="Giglioti E.A."/>
            <person name="Goes-Neto A."/>
            <person name="Goldman G.H."/>
            <person name="Goldman M.H.S."/>
            <person name="Harakava R."/>
            <person name="Jeronimo S.M.B."/>
            <person name="Junqueira-de-Azevedo I.L.M."/>
            <person name="Kimura E.T."/>
            <person name="Kuramae E.E."/>
            <person name="Lemos E.G.M."/>
            <person name="Lemos M.V.F."/>
            <person name="Marino C.L."/>
            <person name="Nunes L.R."/>
            <person name="de Oliveira R.C."/>
            <person name="Pereira G.G."/>
            <person name="Reis M.S."/>
            <person name="Schriefer A."/>
            <person name="Siqueira W.J."/>
            <person name="Sommer P."/>
            <person name="Tsai S.M."/>
            <person name="Simpson A.J.G."/>
            <person name="Ferro J.A."/>
            <person name="Camargo L.E.A."/>
            <person name="Kitajima J.P."/>
            <person name="Setubal J.C."/>
            <person name="Van Sluys M.A."/>
        </authorList>
    </citation>
    <scope>NUCLEOTIDE SEQUENCE [LARGE SCALE GENOMIC DNA]</scope>
    <source>
        <strain>Fiocruz L1-130</strain>
    </source>
</reference>
<dbReference type="EC" id="2.7.7.18" evidence="1"/>
<dbReference type="EMBL" id="AE016823">
    <property type="protein sequence ID" value="AAS71326.1"/>
    <property type="molecule type" value="Genomic_DNA"/>
</dbReference>
<dbReference type="RefSeq" id="WP_001088891.1">
    <property type="nucleotide sequence ID" value="NC_005823.1"/>
</dbReference>
<dbReference type="SMR" id="Q72NR0"/>
<dbReference type="GeneID" id="61142648"/>
<dbReference type="KEGG" id="lic:LIC_12770"/>
<dbReference type="HOGENOM" id="CLU_069765_2_0_12"/>
<dbReference type="UniPathway" id="UPA00253">
    <property type="reaction ID" value="UER00332"/>
</dbReference>
<dbReference type="Proteomes" id="UP000007037">
    <property type="component" value="Chromosome I"/>
</dbReference>
<dbReference type="GO" id="GO:0005524">
    <property type="term" value="F:ATP binding"/>
    <property type="evidence" value="ECO:0007669"/>
    <property type="project" value="UniProtKB-KW"/>
</dbReference>
<dbReference type="GO" id="GO:0004515">
    <property type="term" value="F:nicotinate-nucleotide adenylyltransferase activity"/>
    <property type="evidence" value="ECO:0007669"/>
    <property type="project" value="UniProtKB-UniRule"/>
</dbReference>
<dbReference type="GO" id="GO:0009435">
    <property type="term" value="P:NAD biosynthetic process"/>
    <property type="evidence" value="ECO:0007669"/>
    <property type="project" value="UniProtKB-UniRule"/>
</dbReference>
<dbReference type="CDD" id="cd02165">
    <property type="entry name" value="NMNAT"/>
    <property type="match status" value="1"/>
</dbReference>
<dbReference type="FunFam" id="3.40.50.620:FF:000251">
    <property type="entry name" value="Probable nicotinate-nucleotide adenylyltransferase"/>
    <property type="match status" value="1"/>
</dbReference>
<dbReference type="Gene3D" id="3.40.50.620">
    <property type="entry name" value="HUPs"/>
    <property type="match status" value="1"/>
</dbReference>
<dbReference type="HAMAP" id="MF_00244">
    <property type="entry name" value="NaMN_adenylyltr"/>
    <property type="match status" value="1"/>
</dbReference>
<dbReference type="InterPro" id="IPR004821">
    <property type="entry name" value="Cyt_trans-like"/>
</dbReference>
<dbReference type="InterPro" id="IPR005248">
    <property type="entry name" value="NadD/NMNAT"/>
</dbReference>
<dbReference type="InterPro" id="IPR014729">
    <property type="entry name" value="Rossmann-like_a/b/a_fold"/>
</dbReference>
<dbReference type="NCBIfam" id="TIGR00125">
    <property type="entry name" value="cyt_tran_rel"/>
    <property type="match status" value="1"/>
</dbReference>
<dbReference type="NCBIfam" id="TIGR00482">
    <property type="entry name" value="nicotinate (nicotinamide) nucleotide adenylyltransferase"/>
    <property type="match status" value="1"/>
</dbReference>
<dbReference type="PANTHER" id="PTHR39321">
    <property type="entry name" value="NICOTINATE-NUCLEOTIDE ADENYLYLTRANSFERASE-RELATED"/>
    <property type="match status" value="1"/>
</dbReference>
<dbReference type="PANTHER" id="PTHR39321:SF3">
    <property type="entry name" value="PHOSPHOPANTETHEINE ADENYLYLTRANSFERASE"/>
    <property type="match status" value="1"/>
</dbReference>
<dbReference type="Pfam" id="PF01467">
    <property type="entry name" value="CTP_transf_like"/>
    <property type="match status" value="1"/>
</dbReference>
<dbReference type="SUPFAM" id="SSF52374">
    <property type="entry name" value="Nucleotidylyl transferase"/>
    <property type="match status" value="1"/>
</dbReference>
<accession>Q72NR0</accession>
<evidence type="ECO:0000255" key="1">
    <source>
        <dbReference type="HAMAP-Rule" id="MF_00244"/>
    </source>
</evidence>